<reference key="1">
    <citation type="journal article" date="2000" name="Science">
        <title>Complete genome sequence of Neisseria meningitidis serogroup B strain MC58.</title>
        <authorList>
            <person name="Tettelin H."/>
            <person name="Saunders N.J."/>
            <person name="Heidelberg J.F."/>
            <person name="Jeffries A.C."/>
            <person name="Nelson K.E."/>
            <person name="Eisen J.A."/>
            <person name="Ketchum K.A."/>
            <person name="Hood D.W."/>
            <person name="Peden J.F."/>
            <person name="Dodson R.J."/>
            <person name="Nelson W.C."/>
            <person name="Gwinn M.L."/>
            <person name="DeBoy R.T."/>
            <person name="Peterson J.D."/>
            <person name="Hickey E.K."/>
            <person name="Haft D.H."/>
            <person name="Salzberg S.L."/>
            <person name="White O."/>
            <person name="Fleischmann R.D."/>
            <person name="Dougherty B.A."/>
            <person name="Mason T.M."/>
            <person name="Ciecko A."/>
            <person name="Parksey D.S."/>
            <person name="Blair E."/>
            <person name="Cittone H."/>
            <person name="Clark E.B."/>
            <person name="Cotton M.D."/>
            <person name="Utterback T.R."/>
            <person name="Khouri H.M."/>
            <person name="Qin H."/>
            <person name="Vamathevan J.J."/>
            <person name="Gill J."/>
            <person name="Scarlato V."/>
            <person name="Masignani V."/>
            <person name="Pizza M."/>
            <person name="Grandi G."/>
            <person name="Sun L."/>
            <person name="Smith H.O."/>
            <person name="Fraser C.M."/>
            <person name="Moxon E.R."/>
            <person name="Rappuoli R."/>
            <person name="Venter J.C."/>
        </authorList>
    </citation>
    <scope>NUCLEOTIDE SEQUENCE [LARGE SCALE GENOMIC DNA]</scope>
    <source>
        <strain>ATCC BAA-335 / MC58</strain>
    </source>
</reference>
<reference key="2">
    <citation type="journal article" date="2005" name="Hum. Vaccin.">
        <title>Characterization of the protein content of a meningococcal outer membrane vesicle vaccine by polyacrylamide gel electrophoresis and mass spectrometry.</title>
        <authorList>
            <person name="Vipond C."/>
            <person name="Wheeler J.X."/>
            <person name="Jones C."/>
            <person name="Feavers I.M."/>
            <person name="Suker J."/>
        </authorList>
    </citation>
    <scope>IDENTIFICATION BY MASS SPECTROMETRY [LARGE SCALE ANALYSIS]</scope>
</reference>
<feature type="chain" id="PRO_0000272783" description="Large ribosomal subunit protein uL23">
    <location>
        <begin position="1"/>
        <end position="104"/>
    </location>
</feature>
<protein>
    <recommendedName>
        <fullName evidence="1">Large ribosomal subunit protein uL23</fullName>
    </recommendedName>
    <alternativeName>
        <fullName evidence="2">50S ribosomal protein L23</fullName>
    </alternativeName>
</protein>
<keyword id="KW-1185">Reference proteome</keyword>
<keyword id="KW-0687">Ribonucleoprotein</keyword>
<keyword id="KW-0689">Ribosomal protein</keyword>
<keyword id="KW-0694">RNA-binding</keyword>
<keyword id="KW-0699">rRNA-binding</keyword>
<sequence length="104" mass="11268">MNQQRLTQVILAPIVSEKSNVLAEKRNQMTFKVLANATKPEIKAAVELLFGVQVADVTTVTIKGKVKRFGRTLGRRSDVKKAYVSLAAGQELDLEAAAAAADKE</sequence>
<name>RL23_NEIMB</name>
<dbReference type="EMBL" id="AE002098">
    <property type="protein sequence ID" value="AAF40602.1"/>
    <property type="molecule type" value="Genomic_DNA"/>
</dbReference>
<dbReference type="PIR" id="B81231">
    <property type="entry name" value="B81231"/>
</dbReference>
<dbReference type="RefSeq" id="NP_273202.1">
    <property type="nucleotide sequence ID" value="NC_003112.2"/>
</dbReference>
<dbReference type="RefSeq" id="WP_002243944.1">
    <property type="nucleotide sequence ID" value="NC_003112.2"/>
</dbReference>
<dbReference type="SMR" id="Q9K1I6"/>
<dbReference type="FunCoup" id="Q9K1I6">
    <property type="interactions" value="502"/>
</dbReference>
<dbReference type="STRING" id="122586.NMB0144"/>
<dbReference type="PaxDb" id="122586-NMB0144"/>
<dbReference type="GeneID" id="49972033"/>
<dbReference type="KEGG" id="nme:NMB0144"/>
<dbReference type="PATRIC" id="fig|122586.8.peg.185"/>
<dbReference type="HOGENOM" id="CLU_037562_3_1_4"/>
<dbReference type="InParanoid" id="Q9K1I6"/>
<dbReference type="OrthoDB" id="9793353at2"/>
<dbReference type="Proteomes" id="UP000000425">
    <property type="component" value="Chromosome"/>
</dbReference>
<dbReference type="GO" id="GO:0022625">
    <property type="term" value="C:cytosolic large ribosomal subunit"/>
    <property type="evidence" value="ECO:0000318"/>
    <property type="project" value="GO_Central"/>
</dbReference>
<dbReference type="GO" id="GO:0019843">
    <property type="term" value="F:rRNA binding"/>
    <property type="evidence" value="ECO:0007669"/>
    <property type="project" value="UniProtKB-UniRule"/>
</dbReference>
<dbReference type="GO" id="GO:0003735">
    <property type="term" value="F:structural constituent of ribosome"/>
    <property type="evidence" value="ECO:0000318"/>
    <property type="project" value="GO_Central"/>
</dbReference>
<dbReference type="GO" id="GO:0006412">
    <property type="term" value="P:translation"/>
    <property type="evidence" value="ECO:0007669"/>
    <property type="project" value="UniProtKB-UniRule"/>
</dbReference>
<dbReference type="FunFam" id="3.30.70.330:FF:000001">
    <property type="entry name" value="50S ribosomal protein L23"/>
    <property type="match status" value="1"/>
</dbReference>
<dbReference type="Gene3D" id="3.30.70.330">
    <property type="match status" value="1"/>
</dbReference>
<dbReference type="HAMAP" id="MF_01369_B">
    <property type="entry name" value="Ribosomal_uL23_B"/>
    <property type="match status" value="1"/>
</dbReference>
<dbReference type="InterPro" id="IPR012677">
    <property type="entry name" value="Nucleotide-bd_a/b_plait_sf"/>
</dbReference>
<dbReference type="InterPro" id="IPR013025">
    <property type="entry name" value="Ribosomal_uL23-like"/>
</dbReference>
<dbReference type="InterPro" id="IPR012678">
    <property type="entry name" value="Ribosomal_uL23/eL15/eS24_sf"/>
</dbReference>
<dbReference type="NCBIfam" id="NF004359">
    <property type="entry name" value="PRK05738.1-3"/>
    <property type="match status" value="1"/>
</dbReference>
<dbReference type="NCBIfam" id="NF004363">
    <property type="entry name" value="PRK05738.2-4"/>
    <property type="match status" value="1"/>
</dbReference>
<dbReference type="PANTHER" id="PTHR11620">
    <property type="entry name" value="60S RIBOSOMAL PROTEIN L23A"/>
    <property type="match status" value="1"/>
</dbReference>
<dbReference type="Pfam" id="PF00276">
    <property type="entry name" value="Ribosomal_L23"/>
    <property type="match status" value="1"/>
</dbReference>
<dbReference type="SUPFAM" id="SSF54189">
    <property type="entry name" value="Ribosomal proteins S24e, L23 and L15e"/>
    <property type="match status" value="1"/>
</dbReference>
<evidence type="ECO:0000255" key="1">
    <source>
        <dbReference type="HAMAP-Rule" id="MF_01369"/>
    </source>
</evidence>
<evidence type="ECO:0000305" key="2"/>
<organism>
    <name type="scientific">Neisseria meningitidis serogroup B (strain ATCC BAA-335 / MC58)</name>
    <dbReference type="NCBI Taxonomy" id="122586"/>
    <lineage>
        <taxon>Bacteria</taxon>
        <taxon>Pseudomonadati</taxon>
        <taxon>Pseudomonadota</taxon>
        <taxon>Betaproteobacteria</taxon>
        <taxon>Neisseriales</taxon>
        <taxon>Neisseriaceae</taxon>
        <taxon>Neisseria</taxon>
    </lineage>
</organism>
<comment type="function">
    <text evidence="1">One of the early assembly proteins it binds 23S rRNA. One of the proteins that surrounds the polypeptide exit tunnel on the outside of the ribosome. Forms the main docking site for trigger factor binding to the ribosome.</text>
</comment>
<comment type="subunit">
    <text evidence="1">Part of the 50S ribosomal subunit. Contacts protein L29, and trigger factor when it is bound to the ribosome.</text>
</comment>
<comment type="miscellaneous">
    <text>Present in outer membrane vesicle formulations which are used as vaccines in human.</text>
</comment>
<comment type="similarity">
    <text evidence="1">Belongs to the universal ribosomal protein uL23 family.</text>
</comment>
<accession>Q9K1I6</accession>
<proteinExistence type="evidence at protein level"/>
<gene>
    <name evidence="1" type="primary">rplW</name>
    <name type="ordered locus">NMB0144</name>
</gene>